<sequence>MAQRAVWLISHEPGTPLCGTVRFSRRYPTVEKRARVFNGASYVPIPEDGPFLKALLFELRLLDDDKDFVESRDSCSRINKTSIYGLLIGGEELWPVVAFLKNDIIYACVPLVEQTLSPRPPLISVSGVSQGFEFLFGIQDFLYSGQKNDSELNTKLSQLPDLLLQACPFGTLLDANLKNSLDNTNFASVTQPQKQPAWKTGTYKGKPQVSISITEKVKSMQYDKQGIADTWQVVGTVTCKCDLEGIMPNVTISLNLPTNGSPLQDILVHPCVTSLDSAILTSSSIDAMDDSAFSGPYKFPLTPPLESFNLCYYTSQVPVPPILGFYQLKEEEVQLRITINLKLHESVKNNFEFCEAHIPFYNRGPITHLEYKTSFGQLEVFREKSLLIWIIGQKFPKSMEISLSGTVTFGAKSHEKQPFDPICIGETAYLKLHFRILDYTLTGCYADQHSVQVFASGKPKISAYRKLISSDYYIWNSKAPAPVTYGSLLL</sequence>
<name>AP5M1_MACFA</name>
<feature type="chain" id="PRO_0000374054" description="AP-5 complex subunit mu-1">
    <location>
        <begin position="1"/>
        <end position="490"/>
    </location>
</feature>
<feature type="domain" description="MHD" evidence="3">
    <location>
        <begin position="206"/>
        <end position="476"/>
    </location>
</feature>
<keyword id="KW-0963">Cytoplasm</keyword>
<keyword id="KW-0967">Endosome</keyword>
<keyword id="KW-0458">Lysosome</keyword>
<keyword id="KW-0472">Membrane</keyword>
<keyword id="KW-0653">Protein transport</keyword>
<keyword id="KW-1185">Reference proteome</keyword>
<keyword id="KW-0813">Transport</keyword>
<reference evidence="4" key="1">
    <citation type="submission" date="2005-06" db="EMBL/GenBank/DDBJ databases">
        <title>DNA sequences of macaque genes expressed in brain or testis and its evolutionary implications.</title>
        <authorList>
            <consortium name="International consortium for macaque cDNA sequencing and analysis"/>
        </authorList>
    </citation>
    <scope>NUCLEOTIDE SEQUENCE [LARGE SCALE MRNA]</scope>
    <source>
        <tissue evidence="4">Testis</tissue>
    </source>
</reference>
<proteinExistence type="evidence at transcript level"/>
<dbReference type="EMBL" id="AB169123">
    <property type="protein sequence ID" value="BAE01217.1"/>
    <property type="molecule type" value="mRNA"/>
</dbReference>
<dbReference type="RefSeq" id="NP_001270256.1">
    <property type="nucleotide sequence ID" value="NM_001283327.1"/>
</dbReference>
<dbReference type="SMR" id="Q4R6Q7"/>
<dbReference type="STRING" id="9541.ENSMFAP00000000456"/>
<dbReference type="eggNOG" id="KOG0937">
    <property type="taxonomic scope" value="Eukaryota"/>
</dbReference>
<dbReference type="Proteomes" id="UP000233100">
    <property type="component" value="Unplaced"/>
</dbReference>
<dbReference type="GO" id="GO:0030119">
    <property type="term" value="C:AP-type membrane coat adaptor complex"/>
    <property type="evidence" value="ECO:0000250"/>
    <property type="project" value="UniProtKB"/>
</dbReference>
<dbReference type="GO" id="GO:0005829">
    <property type="term" value="C:cytosol"/>
    <property type="evidence" value="ECO:0000250"/>
    <property type="project" value="UniProtKB"/>
</dbReference>
<dbReference type="GO" id="GO:0005770">
    <property type="term" value="C:late endosome"/>
    <property type="evidence" value="ECO:0000250"/>
    <property type="project" value="UniProtKB"/>
</dbReference>
<dbReference type="GO" id="GO:0031902">
    <property type="term" value="C:late endosome membrane"/>
    <property type="evidence" value="ECO:0007669"/>
    <property type="project" value="UniProtKB-SubCell"/>
</dbReference>
<dbReference type="GO" id="GO:0005765">
    <property type="term" value="C:lysosomal membrane"/>
    <property type="evidence" value="ECO:0007669"/>
    <property type="project" value="UniProtKB-SubCell"/>
</dbReference>
<dbReference type="GO" id="GO:0005764">
    <property type="term" value="C:lysosome"/>
    <property type="evidence" value="ECO:0000250"/>
    <property type="project" value="UniProtKB"/>
</dbReference>
<dbReference type="GO" id="GO:0016020">
    <property type="term" value="C:membrane"/>
    <property type="evidence" value="ECO:0000250"/>
    <property type="project" value="UniProtKB"/>
</dbReference>
<dbReference type="GO" id="GO:0016197">
    <property type="term" value="P:endosomal transport"/>
    <property type="evidence" value="ECO:0000250"/>
    <property type="project" value="UniProtKB"/>
</dbReference>
<dbReference type="GO" id="GO:0015031">
    <property type="term" value="P:protein transport"/>
    <property type="evidence" value="ECO:0007669"/>
    <property type="project" value="UniProtKB-KW"/>
</dbReference>
<dbReference type="CDD" id="cd09256">
    <property type="entry name" value="AP_MuD_MHD"/>
    <property type="match status" value="1"/>
</dbReference>
<dbReference type="FunFam" id="2.60.40.1170:FF:000014">
    <property type="entry name" value="AP-5 complex subunit mu-1 isoform X1"/>
    <property type="match status" value="1"/>
</dbReference>
<dbReference type="Gene3D" id="2.60.40.1170">
    <property type="entry name" value="Mu homology domain, subdomain B"/>
    <property type="match status" value="2"/>
</dbReference>
<dbReference type="InterPro" id="IPR036168">
    <property type="entry name" value="AP2_Mu_C_sf"/>
</dbReference>
<dbReference type="InterPro" id="IPR039591">
    <property type="entry name" value="AP5M1"/>
</dbReference>
<dbReference type="InterPro" id="IPR028565">
    <property type="entry name" value="MHD"/>
</dbReference>
<dbReference type="PANTHER" id="PTHR16082">
    <property type="entry name" value="AP-5 COMPLEX SUBUNIT MU-1"/>
    <property type="match status" value="1"/>
</dbReference>
<dbReference type="PANTHER" id="PTHR16082:SF2">
    <property type="entry name" value="AP-5 COMPLEX SUBUNIT MU-1"/>
    <property type="match status" value="1"/>
</dbReference>
<dbReference type="Pfam" id="PF00928">
    <property type="entry name" value="Adap_comp_sub"/>
    <property type="match status" value="1"/>
</dbReference>
<dbReference type="SUPFAM" id="SSF49447">
    <property type="entry name" value="Second domain of Mu2 adaptin subunit (ap50) of ap2 adaptor"/>
    <property type="match status" value="1"/>
</dbReference>
<dbReference type="PROSITE" id="PS51072">
    <property type="entry name" value="MHD"/>
    <property type="match status" value="1"/>
</dbReference>
<gene>
    <name type="primary">AP5M1</name>
    <name type="ORF">QtsA-17389</name>
</gene>
<comment type="function">
    <text evidence="1">As part of AP-5, a probable fifth adaptor protein complex it may be involved in endosomal transport.</text>
</comment>
<comment type="subunit">
    <text evidence="1">Probably part of the adaptor protein complex 5 (AP-5) a tetramer composed of AP5B1, AP5M1, AP5S1 and AP5Z1.</text>
</comment>
<comment type="subcellular location">
    <subcellularLocation>
        <location>Cytoplasm</location>
        <location>Cytosol</location>
    </subcellularLocation>
    <subcellularLocation>
        <location evidence="1">Late endosome membrane</location>
        <topology evidence="1">Peripheral membrane protein</topology>
        <orientation evidence="1">Cytoplasmic side</orientation>
    </subcellularLocation>
    <subcellularLocation>
        <location evidence="1">Lysosome membrane</location>
        <topology evidence="1">Peripheral membrane protein</topology>
        <orientation evidence="1">Cytoplasmic side</orientation>
    </subcellularLocation>
    <text evidence="1">May cycle on and off membranes.</text>
</comment>
<comment type="similarity">
    <text evidence="2">Belongs to the adaptor complexes medium subunit family.</text>
</comment>
<accession>Q4R6Q7</accession>
<protein>
    <recommendedName>
        <fullName>AP-5 complex subunit mu-1</fullName>
    </recommendedName>
    <alternativeName>
        <fullName>Adaptor-related protein complex 5 subunit mu-1</fullName>
        <shortName>Mu5</shortName>
    </alternativeName>
</protein>
<organism>
    <name type="scientific">Macaca fascicularis</name>
    <name type="common">Crab-eating macaque</name>
    <name type="synonym">Cynomolgus monkey</name>
    <dbReference type="NCBI Taxonomy" id="9541"/>
    <lineage>
        <taxon>Eukaryota</taxon>
        <taxon>Metazoa</taxon>
        <taxon>Chordata</taxon>
        <taxon>Craniata</taxon>
        <taxon>Vertebrata</taxon>
        <taxon>Euteleostomi</taxon>
        <taxon>Mammalia</taxon>
        <taxon>Eutheria</taxon>
        <taxon>Euarchontoglires</taxon>
        <taxon>Primates</taxon>
        <taxon>Haplorrhini</taxon>
        <taxon>Catarrhini</taxon>
        <taxon>Cercopithecidae</taxon>
        <taxon>Cercopithecinae</taxon>
        <taxon>Macaca</taxon>
    </lineage>
</organism>
<evidence type="ECO:0000250" key="1"/>
<evidence type="ECO:0000255" key="2"/>
<evidence type="ECO:0000255" key="3">
    <source>
        <dbReference type="PROSITE-ProRule" id="PRU00404"/>
    </source>
</evidence>
<evidence type="ECO:0000312" key="4">
    <source>
        <dbReference type="EMBL" id="BAE01217.1"/>
    </source>
</evidence>